<accession>P13691</accession>
<name>IAA2_HORVU</name>
<sequence>MGAMWMKSMLLVLLLCMLMVTPMTGARSDNSGPWMWCDPEMGHKVSPLTRCRALVKLECVGNRVPEDVLRDCCQEVANISNEWCRCGDLGSMLRSVYAALGVGGGPEEVFPGCQKDVMKLLVAGVPALCNVPIPNEAAGTRGVCYWSASTDT</sequence>
<reference key="1">
    <citation type="journal article" date="1988" name="Eur. J. Biochem.">
        <title>A dimeric inhibitor or insect alpha-amylase from barley. Cloning of the cDNA and identification of the protein.</title>
        <authorList>
            <person name="Lazaro A."/>
            <person name="Sanchez-Monge R."/>
            <person name="Salcedo G."/>
            <person name="Paz-Ares J."/>
            <person name="Carbonero P."/>
            <person name="Garcia-Olmedo F."/>
        </authorList>
    </citation>
    <scope>NUCLEOTIDE SEQUENCE</scope>
    <scope>PROTEIN SEQUENCE OF 31-53</scope>
    <source>
        <strain>cv. Bomi</strain>
    </source>
</reference>
<protein>
    <recommendedName>
        <fullName>Alpha-amylase inhibitor BDAI-1</fullName>
    </recommendedName>
</protein>
<gene>
    <name type="primary">IAD1</name>
</gene>
<organism>
    <name type="scientific">Hordeum vulgare</name>
    <name type="common">Barley</name>
    <dbReference type="NCBI Taxonomy" id="4513"/>
    <lineage>
        <taxon>Eukaryota</taxon>
        <taxon>Viridiplantae</taxon>
        <taxon>Streptophyta</taxon>
        <taxon>Embryophyta</taxon>
        <taxon>Tracheophyta</taxon>
        <taxon>Spermatophyta</taxon>
        <taxon>Magnoliopsida</taxon>
        <taxon>Liliopsida</taxon>
        <taxon>Poales</taxon>
        <taxon>Poaceae</taxon>
        <taxon>BOP clade</taxon>
        <taxon>Pooideae</taxon>
        <taxon>Triticodae</taxon>
        <taxon>Triticeae</taxon>
        <taxon>Hordeinae</taxon>
        <taxon>Hordeum</taxon>
    </lineage>
</organism>
<evidence type="ECO:0000269" key="1">
    <source>
    </source>
</evidence>
<evidence type="ECO:0000305" key="2"/>
<keyword id="KW-0022">Alpha-amylase inhibitor</keyword>
<keyword id="KW-0903">Direct protein sequencing</keyword>
<keyword id="KW-1015">Disulfide bond</keyword>
<keyword id="KW-0964">Secreted</keyword>
<keyword id="KW-0732">Signal</keyword>
<dbReference type="PIR" id="S00332">
    <property type="entry name" value="S00332"/>
</dbReference>
<dbReference type="SMR" id="P13691"/>
<dbReference type="Allergome" id="8778">
    <property type="allergen name" value="Hor v BDAI"/>
</dbReference>
<dbReference type="ExpressionAtlas" id="P13691">
    <property type="expression patterns" value="baseline and differential"/>
</dbReference>
<dbReference type="GO" id="GO:0005576">
    <property type="term" value="C:extracellular region"/>
    <property type="evidence" value="ECO:0007669"/>
    <property type="project" value="UniProtKB-SubCell"/>
</dbReference>
<dbReference type="GO" id="GO:0015066">
    <property type="term" value="F:alpha-amylase inhibitor activity"/>
    <property type="evidence" value="ECO:0007669"/>
    <property type="project" value="UniProtKB-KW"/>
</dbReference>
<dbReference type="GO" id="GO:0004867">
    <property type="term" value="F:serine-type endopeptidase inhibitor activity"/>
    <property type="evidence" value="ECO:0007669"/>
    <property type="project" value="InterPro"/>
</dbReference>
<dbReference type="CDD" id="cd00261">
    <property type="entry name" value="AAI_SS"/>
    <property type="match status" value="1"/>
</dbReference>
<dbReference type="Gene3D" id="1.10.110.10">
    <property type="entry name" value="Plant lipid-transfer and hydrophobic proteins"/>
    <property type="match status" value="1"/>
</dbReference>
<dbReference type="InterPro" id="IPR002411">
    <property type="entry name" value="Allergen/amylase_inhib_rice"/>
</dbReference>
<dbReference type="InterPro" id="IPR006106">
    <property type="entry name" value="Allergen/soft/tryp_amyl_inhib"/>
</dbReference>
<dbReference type="InterPro" id="IPR006105">
    <property type="entry name" value="Allergen/tryp_amyl_inhib_CS"/>
</dbReference>
<dbReference type="InterPro" id="IPR036312">
    <property type="entry name" value="Bifun_inhib/LTP/seed_sf"/>
</dbReference>
<dbReference type="InterPro" id="IPR016140">
    <property type="entry name" value="Bifunc_inhib/LTP/seed_store"/>
</dbReference>
<dbReference type="PANTHER" id="PTHR34481:SF8">
    <property type="entry name" value="SEED ALLERGENIC PROTEIN RAG1"/>
    <property type="match status" value="1"/>
</dbReference>
<dbReference type="PANTHER" id="PTHR34481">
    <property type="entry name" value="TRYPSIN/FACTOR XIIA INHIBITOR-RELATED"/>
    <property type="match status" value="1"/>
</dbReference>
<dbReference type="Pfam" id="PF00234">
    <property type="entry name" value="Tryp_alpha_amyl"/>
    <property type="match status" value="1"/>
</dbReference>
<dbReference type="PIRSF" id="PIRSF001657">
    <property type="entry name" value="Allergen/amylase_inhib"/>
    <property type="match status" value="1"/>
</dbReference>
<dbReference type="PRINTS" id="PR00808">
    <property type="entry name" value="AMLASEINHBTR"/>
</dbReference>
<dbReference type="PRINTS" id="PR00809">
    <property type="entry name" value="RAGALLERGEN"/>
</dbReference>
<dbReference type="SMART" id="SM00499">
    <property type="entry name" value="AAI"/>
    <property type="match status" value="1"/>
</dbReference>
<dbReference type="SUPFAM" id="SSF47699">
    <property type="entry name" value="Bifunctional inhibitor/lipid-transfer protein/seed storage 2S albumin"/>
    <property type="match status" value="1"/>
</dbReference>
<dbReference type="PROSITE" id="PS00426">
    <property type="entry name" value="CEREAL_TRYP_AMYL_INH"/>
    <property type="match status" value="1"/>
</dbReference>
<feature type="signal peptide" evidence="1">
    <location>
        <begin position="1"/>
        <end position="30"/>
    </location>
</feature>
<feature type="chain" id="PRO_0000014356" description="Alpha-amylase inhibitor BDAI-1">
    <location>
        <begin position="31"/>
        <end position="152"/>
    </location>
</feature>
<comment type="function">
    <text>Could be involved in insect defense mechanisms. Inhibits insect-type alpha-amylase.</text>
</comment>
<comment type="subunit">
    <text>Homodimer.</text>
</comment>
<comment type="subcellular location">
    <subcellularLocation>
        <location>Secreted</location>
    </subcellularLocation>
</comment>
<comment type="tissue specificity">
    <text>Endosperm.</text>
</comment>
<comment type="PTM">
    <text evidence="2">Five disulfide bonds, which are essential for the inhibitor activity, are probably present.</text>
</comment>
<comment type="similarity">
    <text evidence="2">Belongs to the protease inhibitor I6 (cereal trypsin/alpha-amylase inhibitor) family.</text>
</comment>
<proteinExistence type="evidence at protein level"/>